<keyword id="KW-0002">3D-structure</keyword>
<keyword id="KW-1015">Disulfide bond</keyword>
<keyword id="KW-0574">Periplasm</keyword>
<keyword id="KW-0676">Redox-active center</keyword>
<keyword id="KW-1185">Reference proteome</keyword>
<keyword id="KW-0732">Signal</keyword>
<sequence length="208" mass="23105">MKKIWLALAGLVLAFSASAAQYEDGKQYTTLEKPVAGAPQVLEFFSFFCPHCYQFEEVLHISDNVKKKLPEGVKMTKYHVNFMGGDLGKDLTQAWAVAMALGVEDKVTVPLFEGVQKTQTIRSASDIRDVFINAGIKGEEYDAAWNSFVVKSLVAQQEKAAADVQLRGVPAMFVNGKYQLNPQGMDTSNMDVFVQQYADTVKYLSEEK</sequence>
<dbReference type="EMBL" id="D38253">
    <property type="protein sequence ID" value="BAA07407.1"/>
    <property type="molecule type" value="Genomic_DNA"/>
</dbReference>
<dbReference type="EMBL" id="AE005674">
    <property type="protein sequence ID" value="AAN45366.1"/>
    <property type="molecule type" value="Genomic_DNA"/>
</dbReference>
<dbReference type="EMBL" id="AE014073">
    <property type="protein sequence ID" value="AAP18832.1"/>
    <property type="molecule type" value="Genomic_DNA"/>
</dbReference>
<dbReference type="RefSeq" id="NP_709659.1">
    <property type="nucleotide sequence ID" value="NC_004337.2"/>
</dbReference>
<dbReference type="RefSeq" id="WP_000725335.1">
    <property type="nucleotide sequence ID" value="NZ_WPGW01000069.1"/>
</dbReference>
<dbReference type="PDB" id="3DKS">
    <property type="method" value="X-ray"/>
    <property type="resolution" value="1.90 A"/>
    <property type="chains" value="A/B/C/D=20-208"/>
</dbReference>
<dbReference type="PDBsum" id="3DKS"/>
<dbReference type="BMRB" id="P52235"/>
<dbReference type="SMR" id="P52235"/>
<dbReference type="STRING" id="198214.SF3931"/>
<dbReference type="PaxDb" id="198214-SF3931"/>
<dbReference type="GeneID" id="1023438"/>
<dbReference type="KEGG" id="sfl:SF3931"/>
<dbReference type="KEGG" id="sfx:S3816"/>
<dbReference type="PATRIC" id="fig|198214.7.peg.4631"/>
<dbReference type="HOGENOM" id="CLU_088255_3_0_6"/>
<dbReference type="EvolutionaryTrace" id="P52235"/>
<dbReference type="Proteomes" id="UP000001006">
    <property type="component" value="Chromosome"/>
</dbReference>
<dbReference type="Proteomes" id="UP000002673">
    <property type="component" value="Chromosome"/>
</dbReference>
<dbReference type="GO" id="GO:0042597">
    <property type="term" value="C:periplasmic space"/>
    <property type="evidence" value="ECO:0007669"/>
    <property type="project" value="UniProtKB-SubCell"/>
</dbReference>
<dbReference type="GO" id="GO:0015036">
    <property type="term" value="F:disulfide oxidoreductase activity"/>
    <property type="evidence" value="ECO:0007669"/>
    <property type="project" value="UniProtKB-ARBA"/>
</dbReference>
<dbReference type="CDD" id="cd03019">
    <property type="entry name" value="DsbA_DsbA"/>
    <property type="match status" value="1"/>
</dbReference>
<dbReference type="FunFam" id="3.40.30.10:FF:000052">
    <property type="entry name" value="Thiol:disulfide interchange protein"/>
    <property type="match status" value="1"/>
</dbReference>
<dbReference type="Gene3D" id="3.40.30.10">
    <property type="entry name" value="Glutaredoxin"/>
    <property type="match status" value="2"/>
</dbReference>
<dbReference type="InterPro" id="IPR001853">
    <property type="entry name" value="DSBA-like_thioredoxin_dom"/>
</dbReference>
<dbReference type="InterPro" id="IPR023205">
    <property type="entry name" value="DsbA/DsbL"/>
</dbReference>
<dbReference type="InterPro" id="IPR050824">
    <property type="entry name" value="Thiol_disulfide_DsbA"/>
</dbReference>
<dbReference type="InterPro" id="IPR036249">
    <property type="entry name" value="Thioredoxin-like_sf"/>
</dbReference>
<dbReference type="InterPro" id="IPR017937">
    <property type="entry name" value="Thioredoxin_CS"/>
</dbReference>
<dbReference type="InterPro" id="IPR013766">
    <property type="entry name" value="Thioredoxin_domain"/>
</dbReference>
<dbReference type="NCBIfam" id="NF008198">
    <property type="entry name" value="PRK10954.1"/>
    <property type="match status" value="1"/>
</dbReference>
<dbReference type="PANTHER" id="PTHR35891">
    <property type="entry name" value="THIOL:DISULFIDE INTERCHANGE PROTEIN DSBA"/>
    <property type="match status" value="1"/>
</dbReference>
<dbReference type="PANTHER" id="PTHR35891:SF2">
    <property type="entry name" value="THIOL:DISULFIDE INTERCHANGE PROTEIN DSBA"/>
    <property type="match status" value="1"/>
</dbReference>
<dbReference type="Pfam" id="PF01323">
    <property type="entry name" value="DSBA"/>
    <property type="match status" value="1"/>
</dbReference>
<dbReference type="PIRSF" id="PIRSF001488">
    <property type="entry name" value="Tdi_protein"/>
    <property type="match status" value="1"/>
</dbReference>
<dbReference type="SUPFAM" id="SSF52833">
    <property type="entry name" value="Thioredoxin-like"/>
    <property type="match status" value="1"/>
</dbReference>
<dbReference type="PROSITE" id="PS00194">
    <property type="entry name" value="THIOREDOXIN_1"/>
    <property type="match status" value="1"/>
</dbReference>
<dbReference type="PROSITE" id="PS51352">
    <property type="entry name" value="THIOREDOXIN_2"/>
    <property type="match status" value="1"/>
</dbReference>
<accession>P52235</accession>
<evidence type="ECO:0000250" key="1"/>
<evidence type="ECO:0000255" key="2">
    <source>
        <dbReference type="PROSITE-ProRule" id="PRU00691"/>
    </source>
</evidence>
<evidence type="ECO:0000305" key="3"/>
<evidence type="ECO:0007829" key="4">
    <source>
        <dbReference type="PDB" id="3DKS"/>
    </source>
</evidence>
<name>DSBA_SHIFL</name>
<proteinExistence type="evidence at protein level"/>
<organism>
    <name type="scientific">Shigella flexneri</name>
    <dbReference type="NCBI Taxonomy" id="623"/>
    <lineage>
        <taxon>Bacteria</taxon>
        <taxon>Pseudomonadati</taxon>
        <taxon>Pseudomonadota</taxon>
        <taxon>Gammaproteobacteria</taxon>
        <taxon>Enterobacterales</taxon>
        <taxon>Enterobacteriaceae</taxon>
        <taxon>Shigella</taxon>
    </lineage>
</organism>
<feature type="signal peptide" evidence="1">
    <location>
        <begin position="1"/>
        <end position="19"/>
    </location>
</feature>
<feature type="chain" id="PRO_0000034267" description="Thiol:disulfide interchange protein DsbA">
    <location>
        <begin position="20"/>
        <end position="208"/>
    </location>
</feature>
<feature type="domain" description="Thioredoxin" evidence="2">
    <location>
        <begin position="20"/>
        <end position="150"/>
    </location>
</feature>
<feature type="disulfide bond" description="Redox-active" evidence="2">
    <location>
        <begin position="49"/>
        <end position="52"/>
    </location>
</feature>
<feature type="sequence conflict" description="In Ref. 1; BAA07407." evidence="3" ref="1">
    <original>K</original>
    <variation>I</variation>
    <location>
        <position position="68"/>
    </location>
</feature>
<feature type="sequence conflict" description="In Ref. 1; BAA07407." evidence="3" ref="1">
    <original>A</original>
    <variation>V</variation>
    <location>
        <position position="98"/>
    </location>
</feature>
<feature type="sequence conflict" description="In Ref. 1; BAA07407." evidence="3" ref="1">
    <original>A</original>
    <variation>E</variation>
    <location>
        <position position="134"/>
    </location>
</feature>
<feature type="sequence conflict" description="In Ref. 1; BAA07407." evidence="3" ref="1">
    <original>A</original>
    <variation>E</variation>
    <location>
        <position position="161"/>
    </location>
</feature>
<feature type="sequence conflict" description="In Ref. 1; BAA07407." evidence="3" ref="1">
    <original>QGM</original>
    <variation>KGL</variation>
    <location>
        <begin position="183"/>
        <end position="185"/>
    </location>
</feature>
<feature type="sequence conflict" description="In Ref. 1; BAA07407." evidence="3" ref="1">
    <original>E</original>
    <variation>K</variation>
    <location>
        <position position="207"/>
    </location>
</feature>
<feature type="turn" evidence="4">
    <location>
        <begin position="25"/>
        <end position="27"/>
    </location>
</feature>
<feature type="strand" evidence="4">
    <location>
        <begin position="28"/>
        <end position="30"/>
    </location>
</feature>
<feature type="strand" evidence="4">
    <location>
        <begin position="40"/>
        <end position="45"/>
    </location>
</feature>
<feature type="helix" evidence="4">
    <location>
        <begin position="50"/>
        <end position="57"/>
    </location>
</feature>
<feature type="helix" evidence="4">
    <location>
        <begin position="61"/>
        <end position="68"/>
    </location>
</feature>
<feature type="strand" evidence="4">
    <location>
        <begin position="75"/>
        <end position="79"/>
    </location>
</feature>
<feature type="strand" evidence="4">
    <location>
        <begin position="81"/>
        <end position="84"/>
    </location>
</feature>
<feature type="helix" evidence="4">
    <location>
        <begin position="85"/>
        <end position="101"/>
    </location>
</feature>
<feature type="helix" evidence="4">
    <location>
        <begin position="104"/>
        <end position="116"/>
    </location>
</feature>
<feature type="helix" evidence="4">
    <location>
        <begin position="124"/>
        <end position="133"/>
    </location>
</feature>
<feature type="helix" evidence="4">
    <location>
        <begin position="138"/>
        <end position="145"/>
    </location>
</feature>
<feature type="helix" evidence="4">
    <location>
        <begin position="148"/>
        <end position="163"/>
    </location>
</feature>
<feature type="strand" evidence="4">
    <location>
        <begin position="168"/>
        <end position="174"/>
    </location>
</feature>
<feature type="turn" evidence="4">
    <location>
        <begin position="175"/>
        <end position="177"/>
    </location>
</feature>
<feature type="strand" evidence="4">
    <location>
        <begin position="178"/>
        <end position="180"/>
    </location>
</feature>
<feature type="helix" evidence="4">
    <location>
        <begin position="182"/>
        <end position="184"/>
    </location>
</feature>
<feature type="helix" evidence="4">
    <location>
        <begin position="190"/>
        <end position="205"/>
    </location>
</feature>
<comment type="function">
    <text>Required for disulfide bond formation in some periplasmic proteins such as PhoA or OmpA. Acts by transferring its disulfide bond to other proteins and is reduced in the process. DsbA is reoxidized by DsbB. It is required for pilus biogenesis.</text>
</comment>
<comment type="subcellular location">
    <subcellularLocation>
        <location>Periplasm</location>
    </subcellularLocation>
</comment>
<comment type="similarity">
    <text evidence="3">Belongs to the thioredoxin family. DsbA subfamily.</text>
</comment>
<protein>
    <recommendedName>
        <fullName>Thiol:disulfide interchange protein DsbA</fullName>
    </recommendedName>
</protein>
<gene>
    <name type="primary">dsbA</name>
    <name type="ordered locus">SF3931</name>
    <name type="ordered locus">S3816</name>
</gene>
<reference key="1">
    <citation type="journal article" date="1995" name="Proc. Natl. Acad. Sci. U.S.A.">
        <title>Disulfide oxidoreductase activity of Shigella flexneri is required for release of Ipa proteins and invasion of epithelial cells.</title>
        <authorList>
            <person name="Watarai M."/>
            <person name="Tobe T."/>
            <person name="Yoshikawa M."/>
            <person name="Sasakawa C."/>
        </authorList>
    </citation>
    <scope>NUCLEOTIDE SEQUENCE [GENOMIC DNA]</scope>
    <source>
        <strain>YSH6000 / Serotype 2a</strain>
    </source>
</reference>
<reference key="2">
    <citation type="journal article" date="2002" name="Nucleic Acids Res.">
        <title>Genome sequence of Shigella flexneri 2a: insights into pathogenicity through comparison with genomes of Escherichia coli K12 and O157.</title>
        <authorList>
            <person name="Jin Q."/>
            <person name="Yuan Z."/>
            <person name="Xu J."/>
            <person name="Wang Y."/>
            <person name="Shen Y."/>
            <person name="Lu W."/>
            <person name="Wang J."/>
            <person name="Liu H."/>
            <person name="Yang J."/>
            <person name="Yang F."/>
            <person name="Zhang X."/>
            <person name="Zhang J."/>
            <person name="Yang G."/>
            <person name="Wu H."/>
            <person name="Qu D."/>
            <person name="Dong J."/>
            <person name="Sun L."/>
            <person name="Xue Y."/>
            <person name="Zhao A."/>
            <person name="Gao Y."/>
            <person name="Zhu J."/>
            <person name="Kan B."/>
            <person name="Ding K."/>
            <person name="Chen S."/>
            <person name="Cheng H."/>
            <person name="Yao Z."/>
            <person name="He B."/>
            <person name="Chen R."/>
            <person name="Ma D."/>
            <person name="Qiang B."/>
            <person name="Wen Y."/>
            <person name="Hou Y."/>
            <person name="Yu J."/>
        </authorList>
    </citation>
    <scope>NUCLEOTIDE SEQUENCE [LARGE SCALE GENOMIC DNA]</scope>
    <source>
        <strain>301 / Serotype 2a</strain>
    </source>
</reference>
<reference key="3">
    <citation type="journal article" date="2003" name="Infect. Immun.">
        <title>Complete genome sequence and comparative genomics of Shigella flexneri serotype 2a strain 2457T.</title>
        <authorList>
            <person name="Wei J."/>
            <person name="Goldberg M.B."/>
            <person name="Burland V."/>
            <person name="Venkatesan M.M."/>
            <person name="Deng W."/>
            <person name="Fournier G."/>
            <person name="Mayhew G.F."/>
            <person name="Plunkett G. III"/>
            <person name="Rose D.J."/>
            <person name="Darling A."/>
            <person name="Mau B."/>
            <person name="Perna N.T."/>
            <person name="Payne S.M."/>
            <person name="Runyen-Janecky L.J."/>
            <person name="Zhou S."/>
            <person name="Schwartz D.C."/>
            <person name="Blattner F.R."/>
        </authorList>
    </citation>
    <scope>NUCLEOTIDE SEQUENCE [LARGE SCALE GENOMIC DNA]</scope>
    <source>
        <strain>ATCC 700930 / 2457T / Serotype 2a</strain>
    </source>
</reference>